<protein>
    <recommendedName>
        <fullName>Translationally-controlled tumor protein homolog</fullName>
        <shortName>TCTP</shortName>
    </recommendedName>
</protein>
<keyword id="KW-0106">Calcium</keyword>
<keyword id="KW-0963">Cytoplasm</keyword>
<keyword id="KW-1185">Reference proteome</keyword>
<accession>Q4YZC6</accession>
<accession>A0A509AKC8</accession>
<proteinExistence type="inferred from homology"/>
<sequence length="171" mass="19874">MKVYKDIFTNDEVCSDSYIQEDPFGNAEFREIAFEVKSNKRIKGNDDYGIADNSEDAVDGMGADVEHVIDIVDSFQLTSTSLSKKEYSAYVKNFMQRILKHLEEKKPDRVNIFKTKAQPLIKHILTNFDDFEFYMGESLDMEAGLIYSYYKGEEITPRFVYISDGLFEEKY</sequence>
<feature type="chain" id="PRO_0000211289" description="Translationally-controlled tumor protein homolog">
    <location>
        <begin position="1"/>
        <end position="171"/>
    </location>
</feature>
<feature type="domain" description="TCTP" evidence="2">
    <location>
        <begin position="1"/>
        <end position="171"/>
    </location>
</feature>
<gene>
    <name type="primary">TCTP</name>
    <name type="ORF">PB000913.01.0</name>
    <name evidence="3" type="ORF">PBANKA_1110500</name>
</gene>
<evidence type="ECO:0000250" key="1"/>
<evidence type="ECO:0000255" key="2">
    <source>
        <dbReference type="PROSITE-ProRule" id="PRU01133"/>
    </source>
</evidence>
<evidence type="ECO:0000312" key="3">
    <source>
        <dbReference type="EMBL" id="VUC56527.1"/>
    </source>
</evidence>
<evidence type="ECO:0000312" key="4">
    <source>
        <dbReference type="Proteomes" id="UP000074855"/>
    </source>
</evidence>
<organism>
    <name type="scientific">Plasmodium berghei (strain Anka)</name>
    <dbReference type="NCBI Taxonomy" id="5823"/>
    <lineage>
        <taxon>Eukaryota</taxon>
        <taxon>Sar</taxon>
        <taxon>Alveolata</taxon>
        <taxon>Apicomplexa</taxon>
        <taxon>Aconoidasida</taxon>
        <taxon>Haemosporida</taxon>
        <taxon>Plasmodiidae</taxon>
        <taxon>Plasmodium</taxon>
        <taxon>Plasmodium (Vinckeia)</taxon>
    </lineage>
</organism>
<reference evidence="4" key="1">
    <citation type="journal article" date="2014" name="BMC Biol.">
        <title>A comprehensive evaluation of rodent malaria parasite genomes and gene expression.</title>
        <authorList>
            <person name="Otto T.D."/>
            <person name="Bohme U."/>
            <person name="Jackson A.P."/>
            <person name="Hunt M."/>
            <person name="Franke-Fayard B."/>
            <person name="Hoeijmakers W.A."/>
            <person name="Religa A.A."/>
            <person name="Robertson L."/>
            <person name="Sanders M."/>
            <person name="Ogun S.A."/>
            <person name="Cunningham D."/>
            <person name="Erhart A."/>
            <person name="Billker O."/>
            <person name="Khan S.M."/>
            <person name="Stunnenberg H.G."/>
            <person name="Langhorne J."/>
            <person name="Holder A.A."/>
            <person name="Waters A.P."/>
            <person name="Newbold C.I."/>
            <person name="Pain A."/>
            <person name="Berriman M."/>
            <person name="Janse C.J."/>
        </authorList>
    </citation>
    <scope>NUCLEOTIDE SEQUENCE [LARGE SCALE GENOMIC DNA]</scope>
    <source>
        <strain evidence="4">ANKA</strain>
    </source>
</reference>
<dbReference type="EMBL" id="LK023126">
    <property type="protein sequence ID" value="VUC56527.1"/>
    <property type="molecule type" value="Genomic_DNA"/>
</dbReference>
<dbReference type="RefSeq" id="XP_679535.1">
    <property type="nucleotide sequence ID" value="XM_674443.1"/>
</dbReference>
<dbReference type="SMR" id="Q4YZC6"/>
<dbReference type="STRING" id="5823.A0A509AKC8"/>
<dbReference type="VEuPathDB" id="PlasmoDB:PBANKA_1110500"/>
<dbReference type="eggNOG" id="KOG1727">
    <property type="taxonomic scope" value="Eukaryota"/>
</dbReference>
<dbReference type="HOGENOM" id="CLU_095877_0_1_1"/>
<dbReference type="InParanoid" id="A0A509AKC8"/>
<dbReference type="OMA" id="CAMITEG"/>
<dbReference type="Proteomes" id="UP000074855">
    <property type="component" value="Chromosome 11"/>
</dbReference>
<dbReference type="GO" id="GO:0005737">
    <property type="term" value="C:cytoplasm"/>
    <property type="evidence" value="ECO:0007669"/>
    <property type="project" value="UniProtKB-SubCell"/>
</dbReference>
<dbReference type="GO" id="GO:0005509">
    <property type="term" value="F:calcium ion binding"/>
    <property type="evidence" value="ECO:0007669"/>
    <property type="project" value="TreeGrafter"/>
</dbReference>
<dbReference type="Gene3D" id="2.170.150.10">
    <property type="entry name" value="Metal Binding Protein, Guanine Nucleotide Exchange Factor, Chain A"/>
    <property type="match status" value="1"/>
</dbReference>
<dbReference type="InterPro" id="IPR011057">
    <property type="entry name" value="Mss4-like_sf"/>
</dbReference>
<dbReference type="InterPro" id="IPR011323">
    <property type="entry name" value="Mss4/transl-control_tumour"/>
</dbReference>
<dbReference type="InterPro" id="IPR034737">
    <property type="entry name" value="TCTP"/>
</dbReference>
<dbReference type="InterPro" id="IPR018103">
    <property type="entry name" value="Translation_control_tumour_CS"/>
</dbReference>
<dbReference type="InterPro" id="IPR018105">
    <property type="entry name" value="Translational_control_tumour_p"/>
</dbReference>
<dbReference type="PANTHER" id="PTHR11991">
    <property type="entry name" value="TRANSLATIONALLY CONTROLLED TUMOR PROTEIN-RELATED"/>
    <property type="match status" value="1"/>
</dbReference>
<dbReference type="PANTHER" id="PTHR11991:SF0">
    <property type="entry name" value="TRANSLATIONALLY-CONTROLLED TUMOR PROTEIN"/>
    <property type="match status" value="1"/>
</dbReference>
<dbReference type="Pfam" id="PF00838">
    <property type="entry name" value="TCTP"/>
    <property type="match status" value="1"/>
</dbReference>
<dbReference type="PRINTS" id="PR01653">
    <property type="entry name" value="TCTPROTEIN"/>
</dbReference>
<dbReference type="SUPFAM" id="SSF51316">
    <property type="entry name" value="Mss4-like"/>
    <property type="match status" value="1"/>
</dbReference>
<dbReference type="PROSITE" id="PS01003">
    <property type="entry name" value="TCTP_2"/>
    <property type="match status" value="1"/>
</dbReference>
<dbReference type="PROSITE" id="PS51797">
    <property type="entry name" value="TCTP_3"/>
    <property type="match status" value="1"/>
</dbReference>
<name>TCTP_PLABA</name>
<comment type="function">
    <text evidence="1">Involved in calcium binding and microtubule stabilization.</text>
</comment>
<comment type="subcellular location">
    <subcellularLocation>
        <location evidence="1">Cytoplasm</location>
    </subcellularLocation>
</comment>
<comment type="similarity">
    <text evidence="2">Belongs to the TCTP family.</text>
</comment>